<comment type="function">
    <text evidence="2">Regulates the dendritic spine distribution of CTTN/cortactin in hippocampal neurons, and thus controls dendritic spinogenesis and dendritic spine maintenance. Associates with the striatin-interacting phosphatase and kinase (STRIPAK) core complex to regulate dendritic spine distribution of the STRIPAK complex in hippocampal neurons.</text>
</comment>
<comment type="subunit">
    <text evidence="2">Interacts with CTTN/cortactin SH3 domain. Interacts with STRN, STRN4/zinedin and MOB4/phocein; this interactions mediate the association with the STRIPAK core complex and may regulate dendritic spine distribution of the STRIPAK complex in hippocampal neurons. Activation of glutamate receptors weakens the interaction with STRN and STRN4.</text>
</comment>
<comment type="subcellular location">
    <subcellularLocation>
        <location evidence="1">Cytoplasm</location>
        <location evidence="1">Cell cortex</location>
    </subcellularLocation>
    <subcellularLocation>
        <location evidence="2">Cell projection</location>
        <location evidence="2">Dendritic spine</location>
    </subcellularLocation>
    <text evidence="2">Remains associated with dendritic spines even after glutamate stimulation.</text>
</comment>
<feature type="chain" id="PRO_0000260410" description="Cortactin-binding protein 2">
    <location>
        <begin position="1"/>
        <end position="1645"/>
    </location>
</feature>
<feature type="repeat" description="ANK 1">
    <location>
        <begin position="706"/>
        <end position="736"/>
    </location>
</feature>
<feature type="repeat" description="ANK 2">
    <location>
        <begin position="740"/>
        <end position="769"/>
    </location>
</feature>
<feature type="repeat" description="ANK 3">
    <location>
        <begin position="773"/>
        <end position="802"/>
    </location>
</feature>
<feature type="repeat" description="ANK 4">
    <location>
        <begin position="806"/>
        <end position="835"/>
    </location>
</feature>
<feature type="repeat" description="ANK 5">
    <location>
        <begin position="839"/>
        <end position="868"/>
    </location>
</feature>
<feature type="repeat" description="ANK 6">
    <location>
        <begin position="909"/>
        <end position="939"/>
    </location>
</feature>
<feature type="region of interest" description="Disordered" evidence="5">
    <location>
        <begin position="1"/>
        <end position="28"/>
    </location>
</feature>
<feature type="region of interest" description="Disordered" evidence="5">
    <location>
        <begin position="269"/>
        <end position="293"/>
    </location>
</feature>
<feature type="region of interest" description="Disordered" evidence="5">
    <location>
        <begin position="366"/>
        <end position="435"/>
    </location>
</feature>
<feature type="region of interest" description="Disordered" evidence="5">
    <location>
        <begin position="451"/>
        <end position="478"/>
    </location>
</feature>
<feature type="region of interest" description="Disordered" evidence="5">
    <location>
        <begin position="492"/>
        <end position="612"/>
    </location>
</feature>
<feature type="region of interest" description="Disordered" evidence="5">
    <location>
        <begin position="868"/>
        <end position="898"/>
    </location>
</feature>
<feature type="region of interest" description="Disordered" evidence="5">
    <location>
        <begin position="1442"/>
        <end position="1479"/>
    </location>
</feature>
<feature type="region of interest" description="Disordered" evidence="5">
    <location>
        <begin position="1551"/>
        <end position="1645"/>
    </location>
</feature>
<feature type="coiled-coil region" evidence="4">
    <location>
        <begin position="119"/>
        <end position="276"/>
    </location>
</feature>
<feature type="compositionally biased region" description="Polar residues" evidence="5">
    <location>
        <begin position="407"/>
        <end position="417"/>
    </location>
</feature>
<feature type="compositionally biased region" description="Polar residues" evidence="5">
    <location>
        <begin position="451"/>
        <end position="477"/>
    </location>
</feature>
<feature type="compositionally biased region" description="Polar residues" evidence="5">
    <location>
        <begin position="580"/>
        <end position="590"/>
    </location>
</feature>
<feature type="compositionally biased region" description="Polar residues" evidence="5">
    <location>
        <begin position="1558"/>
        <end position="1569"/>
    </location>
</feature>
<feature type="compositionally biased region" description="Polar residues" evidence="5">
    <location>
        <begin position="1582"/>
        <end position="1597"/>
    </location>
</feature>
<feature type="compositionally biased region" description="Low complexity" evidence="5">
    <location>
        <begin position="1620"/>
        <end position="1634"/>
    </location>
</feature>
<feature type="compositionally biased region" description="Polar residues" evidence="5">
    <location>
        <begin position="1635"/>
        <end position="1645"/>
    </location>
</feature>
<feature type="modified residue" description="Asymmetric dimethylarginine" evidence="1">
    <location>
        <position position="495"/>
    </location>
</feature>
<feature type="modified residue" description="Phosphoserine" evidence="3">
    <location>
        <position position="1521"/>
    </location>
</feature>
<evidence type="ECO:0000250" key="1">
    <source>
        <dbReference type="UniProtKB" id="B9EJA2"/>
    </source>
</evidence>
<evidence type="ECO:0000250" key="2">
    <source>
        <dbReference type="UniProtKB" id="Q2IBD4"/>
    </source>
</evidence>
<evidence type="ECO:0000250" key="3">
    <source>
        <dbReference type="UniProtKB" id="Q8WZ74"/>
    </source>
</evidence>
<evidence type="ECO:0000255" key="4"/>
<evidence type="ECO:0000256" key="5">
    <source>
        <dbReference type="SAM" id="MobiDB-lite"/>
    </source>
</evidence>
<keyword id="KW-0040">ANK repeat</keyword>
<keyword id="KW-0966">Cell projection</keyword>
<keyword id="KW-0175">Coiled coil</keyword>
<keyword id="KW-0963">Cytoplasm</keyword>
<keyword id="KW-0488">Methylation</keyword>
<keyword id="KW-0597">Phosphoprotein</keyword>
<keyword id="KW-1185">Reference proteome</keyword>
<keyword id="KW-0677">Repeat</keyword>
<keyword id="KW-0770">Synapse</keyword>
<name>CTTB2_MUSPF</name>
<gene>
    <name type="primary">CTTNBP2</name>
    <name type="synonym">CORTBP2</name>
</gene>
<accession>Q07E15</accession>
<sequence>MATDGASCEPDFSRAPEDAEGATAEAAKKEFDVDTLSKSELRMLLSVMEGELEARDLVIEALRARRKEVFIQERYGRFNLNDPFLALQRDYEAGAGEKEKKPVCTNPLSILEAVMAHCRKMQERMSTQLAAAESRQKKLEMEKLQLQGLEQEHKQLAARLEEERGKNKHVVLMLVKECKQLSGKVLDEAQKLEDVLARLEEEKKKTGTLEEQLSAEKRKSTEMEAQMEKQLSEFDTEREQLRAKLHREEAHTTDLKEEIDKMKKMIEQLKRGNDSKPSLSLPRKTKDRRSVSISVGTEGPVTRSVACQTDPAVESIDHVKKLPLTVPVKPPTGSPLVSANTKGNVCPSAALGRPGIDRQASHGDLIVSSLPTVPPPSASKIEENGPSTGSPSSTPPLPNSTAPPTVQTPTIAPQSHAQAAPGHSLHSPCANAALHPGLNPRIQAARFRFQGNANDPDQNGNTTQSPPSRDVSPTSRDSLVAKQLARNTVTQALSRFTSPPAGAPPRPGAPSTGDVGTCPPVGRTSLKTPGVARVDRGNPPPIPPKKPGLSQTPSPPHPQLKVIMDSSRASSAGAKVDNKTMASPPSTLPQGNRVINEENLPKSSSPQLPPKPSIDLTVAPAGCGVSALATSQVGAWPAETPGLSQPACSESSLVIPTTIAFCSSINPVSASSCRTGASDSLLVAASGWSPSLTPLLMSGGPAPLAGRPTLLQQAAAQGNVTLLSMLLNEEGLDINYSCEDGHSALYSAAKNGHTDCVRLLLNAEAQVNAADKNGFTPLCAAAAQGHFKCVELLIAYNANINHAADEGQTPLYLACKNGNKECIKHLLEAGTDRSVKTRDGWTPVHAAVDAGNVDSLKLLMYHRAPARRNSLHEEEPESGVFDLDQGEESPEGTSKPVIPADLINHADREGWTAAHIAASKGFKDCLEILCKHRGLEPERRDKCNRTAHDVATDDCKHLLENLNALKIPVRISGGESPPGNYGSDDFECENTICALNIRKQTSWEDFSKAVSQALTNHFQAISSDGWRSLEDGTFNNTTDSCIGLSTSSVRSVMLGNVPWSTGQSFSQSPWDFMKKNKAEQVTVFLSGPQEGCLSSVTYTSMIPLQMLQNYLRLVEQYHNVIFHGPEGSLQDYVAHQLALCMKHRQMAAGFTCEIVRAKVDAGFSKEQLGDLFISSACLIPVKQSPMNKKVIIVLENLEKCSLSELLGDFLAPLENRSTESPWILQKGNGTSECYYFHENCFLMGTIAKACLQGSDLLVQQHFRWVQLRWDGEPMQGLLPRFLRRKVMNKFRGQVPSPCDPVCKTVDWALAVWRQLNSCLARLGTPEALLGPEYFLSCPVVPGHAQATVKWMAKLWNAVIAPRVQEAVLSRASVRRQPGLGLTAARSRPSQGQQAVVKVALSILLNKAVLHGCPLQRADLDQHVADFKGGAFPLSIVSSYNSCSRKKGESGAWRKVSTSPRKKSGRFSPPSWSKPGPSEEGIKVKAISQLNYNRNASLSKQKSLENDLSLTLNLEQRLSLGSDDEADLVQELQSMCSSKSESDISKIADSRDDLRSFDSPGNSPAFSATVNPRMPVSPKEVSPFSSHQPTECSNSQSKMELGVSRVKSFLPVPRSKVTQCSQNTKRSSSSSNTRQIEINNNSKEEI</sequence>
<dbReference type="EMBL" id="DP000183">
    <property type="protein sequence ID" value="ABI93661.1"/>
    <property type="molecule type" value="Genomic_DNA"/>
</dbReference>
<dbReference type="RefSeq" id="XP_004741960.2">
    <property type="nucleotide sequence ID" value="XM_004741903.2"/>
</dbReference>
<dbReference type="SMR" id="Q07E15"/>
<dbReference type="GeneID" id="101671972"/>
<dbReference type="KEGG" id="mpuf:101671972"/>
<dbReference type="CTD" id="83992"/>
<dbReference type="eggNOG" id="ENOG502QWG2">
    <property type="taxonomic scope" value="Eukaryota"/>
</dbReference>
<dbReference type="HOGENOM" id="CLU_004926_0_0_1"/>
<dbReference type="InParanoid" id="Q07E15"/>
<dbReference type="OMA" id="MCPVEAL"/>
<dbReference type="OrthoDB" id="6021133at2759"/>
<dbReference type="Proteomes" id="UP000000715">
    <property type="component" value="Unplaced"/>
</dbReference>
<dbReference type="GO" id="GO:0005938">
    <property type="term" value="C:cell cortex"/>
    <property type="evidence" value="ECO:0007669"/>
    <property type="project" value="UniProtKB-SubCell"/>
</dbReference>
<dbReference type="GO" id="GO:0043197">
    <property type="term" value="C:dendritic spine"/>
    <property type="evidence" value="ECO:0000250"/>
    <property type="project" value="UniProtKB"/>
</dbReference>
<dbReference type="GO" id="GO:0090443">
    <property type="term" value="C:FAR/SIN/STRIPAK complex"/>
    <property type="evidence" value="ECO:0000250"/>
    <property type="project" value="UniProtKB"/>
</dbReference>
<dbReference type="GO" id="GO:0098978">
    <property type="term" value="C:glutamatergic synapse"/>
    <property type="evidence" value="ECO:0007669"/>
    <property type="project" value="Ensembl"/>
</dbReference>
<dbReference type="GO" id="GO:0098871">
    <property type="term" value="C:postsynaptic actin cytoskeleton"/>
    <property type="evidence" value="ECO:0007669"/>
    <property type="project" value="Ensembl"/>
</dbReference>
<dbReference type="GO" id="GO:0051721">
    <property type="term" value="F:protein phosphatase 2A binding"/>
    <property type="evidence" value="ECO:0007669"/>
    <property type="project" value="TreeGrafter"/>
</dbReference>
<dbReference type="CDD" id="cd14686">
    <property type="entry name" value="bZIP"/>
    <property type="match status" value="1"/>
</dbReference>
<dbReference type="Gene3D" id="1.25.40.20">
    <property type="entry name" value="Ankyrin repeat-containing domain"/>
    <property type="match status" value="1"/>
</dbReference>
<dbReference type="InterPro" id="IPR002110">
    <property type="entry name" value="Ankyrin_rpt"/>
</dbReference>
<dbReference type="InterPro" id="IPR036770">
    <property type="entry name" value="Ankyrin_rpt-contain_sf"/>
</dbReference>
<dbReference type="InterPro" id="IPR050719">
    <property type="entry name" value="Cortactin-Actin_Reg"/>
</dbReference>
<dbReference type="InterPro" id="IPR019131">
    <property type="entry name" value="Cortactin-binding_p2_N"/>
</dbReference>
<dbReference type="PANTHER" id="PTHR23166:SF9">
    <property type="entry name" value="CTTNBP2 N-TERMINAL-LIKE PROTEIN"/>
    <property type="match status" value="1"/>
</dbReference>
<dbReference type="PANTHER" id="PTHR23166">
    <property type="entry name" value="FILAMIN/GPBP-INTERACTING PROTEIN"/>
    <property type="match status" value="1"/>
</dbReference>
<dbReference type="Pfam" id="PF25408">
    <property type="entry name" value="AAA_lid_NAV1"/>
    <property type="match status" value="1"/>
</dbReference>
<dbReference type="Pfam" id="PF00023">
    <property type="entry name" value="Ank"/>
    <property type="match status" value="3"/>
</dbReference>
<dbReference type="Pfam" id="PF12796">
    <property type="entry name" value="Ank_2"/>
    <property type="match status" value="1"/>
</dbReference>
<dbReference type="Pfam" id="PF09727">
    <property type="entry name" value="CortBP2"/>
    <property type="match status" value="1"/>
</dbReference>
<dbReference type="SMART" id="SM00248">
    <property type="entry name" value="ANK"/>
    <property type="match status" value="6"/>
</dbReference>
<dbReference type="SUPFAM" id="SSF48403">
    <property type="entry name" value="Ankyrin repeat"/>
    <property type="match status" value="1"/>
</dbReference>
<dbReference type="PROSITE" id="PS50297">
    <property type="entry name" value="ANK_REP_REGION"/>
    <property type="match status" value="1"/>
</dbReference>
<dbReference type="PROSITE" id="PS50088">
    <property type="entry name" value="ANK_REPEAT"/>
    <property type="match status" value="4"/>
</dbReference>
<organism>
    <name type="scientific">Mustela putorius furo</name>
    <name type="common">European domestic ferret</name>
    <name type="synonym">Mustela furo</name>
    <dbReference type="NCBI Taxonomy" id="9669"/>
    <lineage>
        <taxon>Eukaryota</taxon>
        <taxon>Metazoa</taxon>
        <taxon>Chordata</taxon>
        <taxon>Craniata</taxon>
        <taxon>Vertebrata</taxon>
        <taxon>Euteleostomi</taxon>
        <taxon>Mammalia</taxon>
        <taxon>Eutheria</taxon>
        <taxon>Laurasiatheria</taxon>
        <taxon>Carnivora</taxon>
        <taxon>Caniformia</taxon>
        <taxon>Musteloidea</taxon>
        <taxon>Mustelidae</taxon>
        <taxon>Mustelinae</taxon>
        <taxon>Mustela</taxon>
    </lineage>
</organism>
<proteinExistence type="inferred from homology"/>
<reference key="1">
    <citation type="submission" date="2006-09" db="EMBL/GenBank/DDBJ databases">
        <title>NISC comparative sequencing initiative.</title>
        <authorList>
            <person name="Antonellis A."/>
            <person name="Ayele K."/>
            <person name="Benjamin B."/>
            <person name="Blakesley R.W."/>
            <person name="Boakye A."/>
            <person name="Bouffard G.G."/>
            <person name="Brinkley C."/>
            <person name="Brooks S."/>
            <person name="Chu G."/>
            <person name="Coleman H."/>
            <person name="Engle J."/>
            <person name="Gestole M."/>
            <person name="Greene A."/>
            <person name="Guan X."/>
            <person name="Gupta J."/>
            <person name="Haghighi P."/>
            <person name="Han J."/>
            <person name="Hansen N."/>
            <person name="Ho S.-L."/>
            <person name="Hu P."/>
            <person name="Hunter G."/>
            <person name="Hurle B."/>
            <person name="Idol J.R."/>
            <person name="Kwong P."/>
            <person name="Laric P."/>
            <person name="Larson S."/>
            <person name="Lee-Lin S.-Q."/>
            <person name="Legaspi R."/>
            <person name="Madden M."/>
            <person name="Maduro Q.L."/>
            <person name="Maduro V.B."/>
            <person name="Margulies E.H."/>
            <person name="Masiello C."/>
            <person name="Maskeri B."/>
            <person name="McDowell J."/>
            <person name="Mojidi H.A."/>
            <person name="Mullikin J.C."/>
            <person name="Oestreicher J.S."/>
            <person name="Park M."/>
            <person name="Portnoy M.E."/>
            <person name="Prasad A."/>
            <person name="Puri O."/>
            <person name="Reddix-Dugue N."/>
            <person name="Schandler K."/>
            <person name="Schueler M.G."/>
            <person name="Sison C."/>
            <person name="Stantripop S."/>
            <person name="Stephen E."/>
            <person name="Taye A."/>
            <person name="Thomas J.W."/>
            <person name="Thomas P.J."/>
            <person name="Tsipouri V."/>
            <person name="Ung L."/>
            <person name="Vogt J.L."/>
            <person name="Wetherby K.D."/>
            <person name="Young A."/>
            <person name="Green E.D."/>
        </authorList>
    </citation>
    <scope>NUCLEOTIDE SEQUENCE [LARGE SCALE GENOMIC DNA]</scope>
</reference>
<protein>
    <recommendedName>
        <fullName>Cortactin-binding protein 2</fullName>
        <shortName>CortBP2</shortName>
    </recommendedName>
</protein>